<reference key="1">
    <citation type="journal article" date="2006" name="J. Bacteriol.">
        <title>Complete genome sequence of Yersinia pestis strains Antiqua and Nepal516: evidence of gene reduction in an emerging pathogen.</title>
        <authorList>
            <person name="Chain P.S.G."/>
            <person name="Hu P."/>
            <person name="Malfatti S.A."/>
            <person name="Radnedge L."/>
            <person name="Larimer F."/>
            <person name="Vergez L.M."/>
            <person name="Worsham P."/>
            <person name="Chu M.C."/>
            <person name="Andersen G.L."/>
        </authorList>
    </citation>
    <scope>NUCLEOTIDE SEQUENCE [LARGE SCALE GENOMIC DNA]</scope>
    <source>
        <strain>Nepal516</strain>
    </source>
</reference>
<reference key="2">
    <citation type="submission" date="2009-04" db="EMBL/GenBank/DDBJ databases">
        <title>Yersinia pestis Nepal516A whole genome shotgun sequencing project.</title>
        <authorList>
            <person name="Plunkett G. III"/>
            <person name="Anderson B.D."/>
            <person name="Baumler D.J."/>
            <person name="Burland V."/>
            <person name="Cabot E.L."/>
            <person name="Glasner J.D."/>
            <person name="Mau B."/>
            <person name="Neeno-Eckwall E."/>
            <person name="Perna N.T."/>
            <person name="Munk A.C."/>
            <person name="Tapia R."/>
            <person name="Green L.D."/>
            <person name="Rogers Y.C."/>
            <person name="Detter J.C."/>
            <person name="Bruce D.C."/>
            <person name="Brettin T.S."/>
        </authorList>
    </citation>
    <scope>NUCLEOTIDE SEQUENCE [LARGE SCALE GENOMIC DNA]</scope>
    <source>
        <strain>Nepal516</strain>
    </source>
</reference>
<evidence type="ECO:0000255" key="1">
    <source>
        <dbReference type="HAMAP-Rule" id="MF_00440"/>
    </source>
</evidence>
<protein>
    <recommendedName>
        <fullName evidence="1">Transcriptional repressor NrdR</fullName>
    </recommendedName>
</protein>
<organism>
    <name type="scientific">Yersinia pestis bv. Antiqua (strain Nepal516)</name>
    <dbReference type="NCBI Taxonomy" id="377628"/>
    <lineage>
        <taxon>Bacteria</taxon>
        <taxon>Pseudomonadati</taxon>
        <taxon>Pseudomonadota</taxon>
        <taxon>Gammaproteobacteria</taxon>
        <taxon>Enterobacterales</taxon>
        <taxon>Yersiniaceae</taxon>
        <taxon>Yersinia</taxon>
    </lineage>
</organism>
<accession>Q1CL94</accession>
<accession>C4GQH8</accession>
<gene>
    <name evidence="1" type="primary">nrdR</name>
    <name type="ordered locus">YPN_0904</name>
    <name type="ORF">YP516_0979</name>
</gene>
<name>NRDR_YERPN</name>
<feature type="chain" id="PRO_0000264231" description="Transcriptional repressor NrdR">
    <location>
        <begin position="1"/>
        <end position="149"/>
    </location>
</feature>
<feature type="domain" description="ATP-cone" evidence="1">
    <location>
        <begin position="49"/>
        <end position="139"/>
    </location>
</feature>
<feature type="zinc finger region" evidence="1">
    <location>
        <begin position="3"/>
        <end position="34"/>
    </location>
</feature>
<dbReference type="EMBL" id="CP000305">
    <property type="protein sequence ID" value="ABG17236.1"/>
    <property type="molecule type" value="Genomic_DNA"/>
</dbReference>
<dbReference type="EMBL" id="ACNQ01000008">
    <property type="protein sequence ID" value="EEO77319.1"/>
    <property type="molecule type" value="Genomic_DNA"/>
</dbReference>
<dbReference type="RefSeq" id="WP_002208668.1">
    <property type="nucleotide sequence ID" value="NZ_ACNQ01000008.1"/>
</dbReference>
<dbReference type="SMR" id="Q1CL94"/>
<dbReference type="GeneID" id="57975529"/>
<dbReference type="KEGG" id="ypn:YPN_0904"/>
<dbReference type="HOGENOM" id="CLU_108412_0_0_6"/>
<dbReference type="Proteomes" id="UP000008936">
    <property type="component" value="Chromosome"/>
</dbReference>
<dbReference type="GO" id="GO:0005524">
    <property type="term" value="F:ATP binding"/>
    <property type="evidence" value="ECO:0007669"/>
    <property type="project" value="UniProtKB-KW"/>
</dbReference>
<dbReference type="GO" id="GO:0003677">
    <property type="term" value="F:DNA binding"/>
    <property type="evidence" value="ECO:0007669"/>
    <property type="project" value="UniProtKB-KW"/>
</dbReference>
<dbReference type="GO" id="GO:0008270">
    <property type="term" value="F:zinc ion binding"/>
    <property type="evidence" value="ECO:0007669"/>
    <property type="project" value="UniProtKB-UniRule"/>
</dbReference>
<dbReference type="GO" id="GO:0045892">
    <property type="term" value="P:negative regulation of DNA-templated transcription"/>
    <property type="evidence" value="ECO:0007669"/>
    <property type="project" value="UniProtKB-UniRule"/>
</dbReference>
<dbReference type="HAMAP" id="MF_00440">
    <property type="entry name" value="NrdR"/>
    <property type="match status" value="1"/>
</dbReference>
<dbReference type="InterPro" id="IPR005144">
    <property type="entry name" value="ATP-cone_dom"/>
</dbReference>
<dbReference type="InterPro" id="IPR055173">
    <property type="entry name" value="NrdR-like_N"/>
</dbReference>
<dbReference type="InterPro" id="IPR003796">
    <property type="entry name" value="RNR_NrdR-like"/>
</dbReference>
<dbReference type="NCBIfam" id="TIGR00244">
    <property type="entry name" value="transcriptional regulator NrdR"/>
    <property type="match status" value="1"/>
</dbReference>
<dbReference type="PANTHER" id="PTHR30455">
    <property type="entry name" value="TRANSCRIPTIONAL REPRESSOR NRDR"/>
    <property type="match status" value="1"/>
</dbReference>
<dbReference type="PANTHER" id="PTHR30455:SF2">
    <property type="entry name" value="TRANSCRIPTIONAL REPRESSOR NRDR"/>
    <property type="match status" value="1"/>
</dbReference>
<dbReference type="Pfam" id="PF03477">
    <property type="entry name" value="ATP-cone"/>
    <property type="match status" value="1"/>
</dbReference>
<dbReference type="Pfam" id="PF22811">
    <property type="entry name" value="Zn_ribbon_NrdR"/>
    <property type="match status" value="1"/>
</dbReference>
<dbReference type="PROSITE" id="PS51161">
    <property type="entry name" value="ATP_CONE"/>
    <property type="match status" value="1"/>
</dbReference>
<sequence>MHCPFCAAVDTKVIDSRLVSDGSQVRRRRQCLDCNERFTTFEVAELVLPRVIKSDEVREPFNEEKLRRGMLKALEKRPVSSDDVETAISHIKSQLRATGEREVPTKMVGNLVMEALKRLDKVAYIRFASVYRSFEDVREFGEEIARLQD</sequence>
<comment type="function">
    <text evidence="1">Negatively regulates transcription of bacterial ribonucleotide reductase nrd genes and operons by binding to NrdR-boxes.</text>
</comment>
<comment type="cofactor">
    <cofactor evidence="1">
        <name>Zn(2+)</name>
        <dbReference type="ChEBI" id="CHEBI:29105"/>
    </cofactor>
    <text evidence="1">Binds 1 zinc ion.</text>
</comment>
<comment type="similarity">
    <text evidence="1">Belongs to the NrdR family.</text>
</comment>
<proteinExistence type="inferred from homology"/>
<keyword id="KW-0067">ATP-binding</keyword>
<keyword id="KW-0238">DNA-binding</keyword>
<keyword id="KW-0479">Metal-binding</keyword>
<keyword id="KW-0547">Nucleotide-binding</keyword>
<keyword id="KW-0678">Repressor</keyword>
<keyword id="KW-0804">Transcription</keyword>
<keyword id="KW-0805">Transcription regulation</keyword>
<keyword id="KW-0862">Zinc</keyword>
<keyword id="KW-0863">Zinc-finger</keyword>